<keyword id="KW-0891">Chondrogenesis</keyword>
<keyword id="KW-0165">Cleavage on pair of basic residues</keyword>
<keyword id="KW-0202">Cytokine</keyword>
<keyword id="KW-0217">Developmental protein</keyword>
<keyword id="KW-0221">Differentiation</keyword>
<keyword id="KW-1015">Disulfide bond</keyword>
<keyword id="KW-0272">Extracellular matrix</keyword>
<keyword id="KW-0325">Glycoprotein</keyword>
<keyword id="KW-0339">Growth factor</keyword>
<keyword id="KW-0892">Osteogenesis</keyword>
<keyword id="KW-0597">Phosphoprotein</keyword>
<keyword id="KW-1185">Reference proteome</keyword>
<keyword id="KW-0964">Secreted</keyword>
<keyword id="KW-0732">Signal</keyword>
<feature type="signal peptide" evidence="4">
    <location>
        <begin position="1"/>
        <end position="19"/>
    </location>
</feature>
<feature type="propeptide" id="PRO_0000033862">
    <location>
        <begin position="20"/>
        <end position="292"/>
    </location>
</feature>
<feature type="chain" id="PRO_0000033863" description="Bone morphogenetic protein 4">
    <location>
        <begin position="293"/>
        <end position="408"/>
    </location>
</feature>
<feature type="region of interest" description="Disordered" evidence="5">
    <location>
        <begin position="91"/>
        <end position="113"/>
    </location>
</feature>
<feature type="region of interest" description="Disordered" evidence="5">
    <location>
        <begin position="281"/>
        <end position="307"/>
    </location>
</feature>
<feature type="compositionally biased region" description="Basic residues" evidence="5">
    <location>
        <begin position="284"/>
        <end position="307"/>
    </location>
</feature>
<feature type="modified residue" description="Phosphoserine" evidence="2">
    <location>
        <position position="91"/>
    </location>
</feature>
<feature type="glycosylation site" description="N-linked (GlcNAc...) asparagine" evidence="4">
    <location>
        <position position="144"/>
    </location>
</feature>
<feature type="glycosylation site" description="N-linked (GlcNAc...) asparagine" evidence="4">
    <location>
        <position position="209"/>
    </location>
</feature>
<feature type="glycosylation site" description="N-linked (GlcNAc...) asparagine" evidence="4">
    <location>
        <position position="350"/>
    </location>
</feature>
<feature type="glycosylation site" description="N-linked (GlcNAc...) asparagine" evidence="4">
    <location>
        <position position="365"/>
    </location>
</feature>
<feature type="disulfide bond" evidence="1">
    <location>
        <begin position="308"/>
        <end position="373"/>
    </location>
</feature>
<feature type="disulfide bond" evidence="1">
    <location>
        <begin position="337"/>
        <end position="405"/>
    </location>
</feature>
<feature type="disulfide bond" evidence="1">
    <location>
        <begin position="341"/>
        <end position="407"/>
    </location>
</feature>
<feature type="disulfide bond" description="Interchain" evidence="1">
    <location>
        <position position="372"/>
    </location>
</feature>
<evidence type="ECO:0000250" key="1"/>
<evidence type="ECO:0000250" key="2">
    <source>
        <dbReference type="UniProtKB" id="P12644"/>
    </source>
</evidence>
<evidence type="ECO:0000250" key="3">
    <source>
        <dbReference type="UniProtKB" id="P21275"/>
    </source>
</evidence>
<evidence type="ECO:0000255" key="4"/>
<evidence type="ECO:0000256" key="5">
    <source>
        <dbReference type="SAM" id="MobiDB-lite"/>
    </source>
</evidence>
<evidence type="ECO:0000305" key="6"/>
<evidence type="ECO:0000312" key="7">
    <source>
        <dbReference type="RGD" id="2213"/>
    </source>
</evidence>
<organism>
    <name type="scientific">Rattus norvegicus</name>
    <name type="common">Rat</name>
    <dbReference type="NCBI Taxonomy" id="10116"/>
    <lineage>
        <taxon>Eukaryota</taxon>
        <taxon>Metazoa</taxon>
        <taxon>Chordata</taxon>
        <taxon>Craniata</taxon>
        <taxon>Vertebrata</taxon>
        <taxon>Euteleostomi</taxon>
        <taxon>Mammalia</taxon>
        <taxon>Eutheria</taxon>
        <taxon>Euarchontoglires</taxon>
        <taxon>Glires</taxon>
        <taxon>Rodentia</taxon>
        <taxon>Myomorpha</taxon>
        <taxon>Muroidea</taxon>
        <taxon>Muridae</taxon>
        <taxon>Murinae</taxon>
        <taxon>Rattus</taxon>
    </lineage>
</organism>
<sequence length="408" mass="46541">MIPGNRMLMVVLLCQVLLGGATDASLIPETGKKKVAEIQGHAGGRRSGQSHELLRDFEATLLQMFGLRRRPQPSKSAVIPDYMRDLYRLQSGEEEEEEQSQGTGLEYPERPASRANTVRSFHHEEHLENIPGTSESSAFRFFFNLSSIPENEVISSAELRLFREQVDQGPDWEQGFHRINIYEVMKPPAEMVPGHLITRLLDTRLVRHNVTRWETFDVSPAVLRWTREKQPNYGLAIEVTHLHQTRTHQGQHVRISRSLPQGSGNWAQLRPLLVTFGHDGRGHTLTRRRAKRSPKHHPQRSRKKNKNCRRHSLYVDFSDVGWNDWIVAPPGYQAFYCHGDCPFPLADHLNSTNHAIVQTLVNSVNSSIPKACCVPTELSAISMLYLDEYDKVVLKNYQEMVVEGCGCR</sequence>
<name>BMP4_RAT</name>
<accession>Q06826</accession>
<gene>
    <name evidence="7" type="primary">Bmp4</name>
    <name evidence="7" type="synonym">Bmp-4</name>
    <name type="synonym">Dvr-4</name>
</gene>
<comment type="function">
    <text evidence="2 3">Growth factor of the TGF-beta superfamily that plays essential roles in many developmental processes, including neurogenesis, vascular development, angiogenesis and osteogenesis (By similarity). Acts in concert with PTHLH/PTHRP to stimulate ductal outgrowth during embryonic mammary development and to inhibit hair follicle induction (By similarity). Initiates the canonical BMP signaling cascade by associating with type I receptor BMPR1A and type II receptor BMPR2. Once all three components are bound together in a complex at the cell surface, BMPR2 phosphorylates and activates BMPR1A. In turn, BMPR1A propagates signal by phosphorylating SMAD1/5/8 that travel to the nucleus and act as activators and repressors of transcription of target genes. Positively regulates the expression of odontogenic development regulator MSX1 via inducing the IPO7-mediated import of SMAD1 to the nucleus (By similarity). Required for MSX1-mediated mesenchymal molar tooth bud development beyond the bud stage, via promoting Wnt signaling (By similarity). Acts as a positive regulator of odontoblast differentiation during mesenchymal tooth germ formation, expression is repressed during the bell stage by MSX1-mediated inhibition of CTNNB1 signaling (By similarity). Able to induce its own expression in dental mesenchymal cells and also in the neighboring dental epithelial cells via an MSX1-mediated pathway (By similarity). Can also signal through non-canonical BMP pathways such as ERK/MAP kinase, PI3K/Akt, or SRC cascades. For example, induces SRC phosphorylation which, in turn, activates VEGFR2, leading to an angiogenic response (By similarity).</text>
</comment>
<comment type="subunit">
    <text evidence="2 3">Homodimer; disulfide-linked (By similarity). Interacts with GREM2. Part of a complex consisting of TWSG1 and CHRD. Interacts with the serine proteases, HTRA1 and HTRA3; the interaction with either inhibits BMP4-mediated signaling. The HTRA protease activity is required for this inhibition (By similarity). Interacts with SOSTDC1. Interacts with FBN1 (via N-terminal domain) and FBN2. Interacts with type I receptor BMPR1A. Interacts with type II receptor BMPR2. Interacts with FSTL1; this interaction inhibits the activation of the BMP4/Smad1/5/8 signaling pathway (By similarity). Interacts with SCUBE3 (By similarity). Interacts with TGFBR3 (By similarity).</text>
</comment>
<comment type="subcellular location">
    <subcellularLocation>
        <location>Secreted</location>
        <location>Extracellular space</location>
        <location>Extracellular matrix</location>
    </subcellularLocation>
</comment>
<comment type="similarity">
    <text evidence="6">Belongs to the TGF-beta family.</text>
</comment>
<reference key="1">
    <citation type="journal article" date="1993" name="Biochim. Biophys. Acta">
        <title>Cloning and sequence of bone morphogenetic protein 4 cDNA from fetal rat calvarial cell.</title>
        <authorList>
            <person name="Chen D."/>
            <person name="Feng J.Q."/>
            <person name="Feng M."/>
            <person name="Harris M.A."/>
            <person name="Mundy G.R."/>
            <person name="Harris S.E."/>
        </authorList>
    </citation>
    <scope>NUCLEOTIDE SEQUENCE [MRNA]</scope>
</reference>
<proteinExistence type="evidence at transcript level"/>
<protein>
    <recommendedName>
        <fullName evidence="7">Bone morphogenetic protein 4</fullName>
        <shortName evidence="7">BMP-4</shortName>
    </recommendedName>
    <alternativeName>
        <fullName evidence="7">Bone morphogenetic protein 2B</fullName>
        <shortName evidence="7">BMP-2B</shortName>
    </alternativeName>
</protein>
<dbReference type="EMBL" id="Z22607">
    <property type="protein sequence ID" value="CAA80329.1"/>
    <property type="molecule type" value="mRNA"/>
</dbReference>
<dbReference type="PIR" id="S38343">
    <property type="entry name" value="S38343"/>
</dbReference>
<dbReference type="SMR" id="Q06826"/>
<dbReference type="FunCoup" id="Q06826">
    <property type="interactions" value="109"/>
</dbReference>
<dbReference type="STRING" id="10116.ENSRNOP00000012957"/>
<dbReference type="GlyCosmos" id="Q06826">
    <property type="glycosylation" value="4 sites, No reported glycans"/>
</dbReference>
<dbReference type="GlyGen" id="Q06826">
    <property type="glycosylation" value="4 sites"/>
</dbReference>
<dbReference type="PhosphoSitePlus" id="Q06826"/>
<dbReference type="PaxDb" id="10116-ENSRNOP00000012957"/>
<dbReference type="UCSC" id="RGD:2213">
    <property type="organism name" value="rat"/>
</dbReference>
<dbReference type="AGR" id="RGD:2213"/>
<dbReference type="RGD" id="2213">
    <property type="gene designation" value="Bmp4"/>
</dbReference>
<dbReference type="eggNOG" id="KOG3900">
    <property type="taxonomic scope" value="Eukaryota"/>
</dbReference>
<dbReference type="InParanoid" id="Q06826"/>
<dbReference type="PhylomeDB" id="Q06826"/>
<dbReference type="Reactome" id="R-RNO-2129379">
    <property type="pathway name" value="Molecules associated with elastic fibres"/>
</dbReference>
<dbReference type="Reactome" id="R-RNO-381426">
    <property type="pathway name" value="Regulation of Insulin-like Growth Factor (IGF) transport and uptake by Insulin-like Growth Factor Binding Proteins (IGFBPs)"/>
</dbReference>
<dbReference type="Reactome" id="R-RNO-8957275">
    <property type="pathway name" value="Post-translational protein phosphorylation"/>
</dbReference>
<dbReference type="PRO" id="PR:Q06826"/>
<dbReference type="Proteomes" id="UP000002494">
    <property type="component" value="Unplaced"/>
</dbReference>
<dbReference type="GO" id="GO:0005576">
    <property type="term" value="C:extracellular region"/>
    <property type="evidence" value="ECO:0000266"/>
    <property type="project" value="RGD"/>
</dbReference>
<dbReference type="GO" id="GO:0005615">
    <property type="term" value="C:extracellular space"/>
    <property type="evidence" value="ECO:0000314"/>
    <property type="project" value="RGD"/>
</dbReference>
<dbReference type="GO" id="GO:0031982">
    <property type="term" value="C:vesicle"/>
    <property type="evidence" value="ECO:0000314"/>
    <property type="project" value="RGD"/>
</dbReference>
<dbReference type="GO" id="GO:0070700">
    <property type="term" value="F:BMP receptor binding"/>
    <property type="evidence" value="ECO:0000250"/>
    <property type="project" value="UniProtKB"/>
</dbReference>
<dbReference type="GO" id="GO:0042056">
    <property type="term" value="F:chemoattractant activity"/>
    <property type="evidence" value="ECO:0000250"/>
    <property type="project" value="UniProtKB"/>
</dbReference>
<dbReference type="GO" id="GO:0039706">
    <property type="term" value="F:co-receptor binding"/>
    <property type="evidence" value="ECO:0000266"/>
    <property type="project" value="RGD"/>
</dbReference>
<dbReference type="GO" id="GO:0005125">
    <property type="term" value="F:cytokine activity"/>
    <property type="evidence" value="ECO:0000266"/>
    <property type="project" value="RGD"/>
</dbReference>
<dbReference type="GO" id="GO:0008083">
    <property type="term" value="F:growth factor activity"/>
    <property type="evidence" value="ECO:0000314"/>
    <property type="project" value="RGD"/>
</dbReference>
<dbReference type="GO" id="GO:0008201">
    <property type="term" value="F:heparin binding"/>
    <property type="evidence" value="ECO:0000266"/>
    <property type="project" value="RGD"/>
</dbReference>
<dbReference type="GO" id="GO:0042802">
    <property type="term" value="F:identical protein binding"/>
    <property type="evidence" value="ECO:0000353"/>
    <property type="project" value="RGD"/>
</dbReference>
<dbReference type="GO" id="GO:0043539">
    <property type="term" value="F:protein serine/threonine kinase activator activity"/>
    <property type="evidence" value="ECO:0000266"/>
    <property type="project" value="RGD"/>
</dbReference>
<dbReference type="GO" id="GO:0036305">
    <property type="term" value="P:ameloblast differentiation"/>
    <property type="evidence" value="ECO:0000266"/>
    <property type="project" value="RGD"/>
</dbReference>
<dbReference type="GO" id="GO:0048646">
    <property type="term" value="P:anatomical structure formation involved in morphogenesis"/>
    <property type="evidence" value="ECO:0000266"/>
    <property type="project" value="RGD"/>
</dbReference>
<dbReference type="GO" id="GO:0060033">
    <property type="term" value="P:anatomical structure regression"/>
    <property type="evidence" value="ECO:0000270"/>
    <property type="project" value="RGD"/>
</dbReference>
<dbReference type="GO" id="GO:0001525">
    <property type="term" value="P:angiogenesis"/>
    <property type="evidence" value="ECO:0000266"/>
    <property type="project" value="RGD"/>
</dbReference>
<dbReference type="GO" id="GO:0009948">
    <property type="term" value="P:anterior/posterior axis specification"/>
    <property type="evidence" value="ECO:0000266"/>
    <property type="project" value="RGD"/>
</dbReference>
<dbReference type="GO" id="GO:0003180">
    <property type="term" value="P:aortic valve morphogenesis"/>
    <property type="evidence" value="ECO:0000266"/>
    <property type="project" value="RGD"/>
</dbReference>
<dbReference type="GO" id="GO:0001568">
    <property type="term" value="P:blood vessel development"/>
    <property type="evidence" value="ECO:0000266"/>
    <property type="project" value="RGD"/>
</dbReference>
<dbReference type="GO" id="GO:0002043">
    <property type="term" value="P:blood vessel endothelial cell proliferation involved in sprouting angiogenesis"/>
    <property type="evidence" value="ECO:0000250"/>
    <property type="project" value="UniProtKB"/>
</dbReference>
<dbReference type="GO" id="GO:0030509">
    <property type="term" value="P:BMP signaling pathway"/>
    <property type="evidence" value="ECO:0000250"/>
    <property type="project" value="UniProtKB"/>
</dbReference>
<dbReference type="GO" id="GO:0060348">
    <property type="term" value="P:bone development"/>
    <property type="evidence" value="ECO:0000266"/>
    <property type="project" value="RGD"/>
</dbReference>
<dbReference type="GO" id="GO:0060442">
    <property type="term" value="P:branching involved in prostate gland morphogenesis"/>
    <property type="evidence" value="ECO:0000266"/>
    <property type="project" value="RGD"/>
</dbReference>
<dbReference type="GO" id="GO:0001658">
    <property type="term" value="P:branching involved in ureteric bud morphogenesis"/>
    <property type="evidence" value="ECO:0000250"/>
    <property type="project" value="UniProtKB"/>
</dbReference>
<dbReference type="GO" id="GO:0060433">
    <property type="term" value="P:bronchus development"/>
    <property type="evidence" value="ECO:0000266"/>
    <property type="project" value="RGD"/>
</dbReference>
<dbReference type="GO" id="GO:0060503">
    <property type="term" value="P:bud dilation involved in lung branching"/>
    <property type="evidence" value="ECO:0000266"/>
    <property type="project" value="RGD"/>
</dbReference>
<dbReference type="GO" id="GO:0060449">
    <property type="term" value="P:bud elongation involved in lung branching"/>
    <property type="evidence" value="ECO:0000266"/>
    <property type="project" value="RGD"/>
</dbReference>
<dbReference type="GO" id="GO:0043010">
    <property type="term" value="P:camera-type eye development"/>
    <property type="evidence" value="ECO:0000266"/>
    <property type="project" value="RGD"/>
</dbReference>
<dbReference type="GO" id="GO:0048593">
    <property type="term" value="P:camera-type eye morphogenesis"/>
    <property type="evidence" value="ECO:0000266"/>
    <property type="project" value="RGD"/>
</dbReference>
<dbReference type="GO" id="GO:0055007">
    <property type="term" value="P:cardiac muscle cell differentiation"/>
    <property type="evidence" value="ECO:0000266"/>
    <property type="project" value="RGD"/>
</dbReference>
<dbReference type="GO" id="GO:0014898">
    <property type="term" value="P:cardiac muscle hypertrophy in response to stress"/>
    <property type="evidence" value="ECO:0000315"/>
    <property type="project" value="RGD"/>
</dbReference>
<dbReference type="GO" id="GO:0045165">
    <property type="term" value="P:cell fate commitment"/>
    <property type="evidence" value="ECO:0000266"/>
    <property type="project" value="RGD"/>
</dbReference>
<dbReference type="GO" id="GO:0008283">
    <property type="term" value="P:cell population proliferation"/>
    <property type="evidence" value="ECO:0000266"/>
    <property type="project" value="RGD"/>
</dbReference>
<dbReference type="GO" id="GO:0071773">
    <property type="term" value="P:cellular response to BMP stimulus"/>
    <property type="evidence" value="ECO:0000270"/>
    <property type="project" value="RGD"/>
</dbReference>
<dbReference type="GO" id="GO:0071549">
    <property type="term" value="P:cellular response to dexamethasone stimulus"/>
    <property type="evidence" value="ECO:0000314"/>
    <property type="project" value="UniProtKB"/>
</dbReference>
<dbReference type="GO" id="GO:0071363">
    <property type="term" value="P:cellular response to growth factor stimulus"/>
    <property type="evidence" value="ECO:0000266"/>
    <property type="project" value="RGD"/>
</dbReference>
<dbReference type="GO" id="GO:0071260">
    <property type="term" value="P:cellular response to mechanical stimulus"/>
    <property type="evidence" value="ECO:0000270"/>
    <property type="project" value="RGD"/>
</dbReference>
<dbReference type="GO" id="GO:0034599">
    <property type="term" value="P:cellular response to oxidative stress"/>
    <property type="evidence" value="ECO:0000314"/>
    <property type="project" value="RGD"/>
</dbReference>
<dbReference type="GO" id="GO:0097067">
    <property type="term" value="P:cellular response to thyroid hormone stimulus"/>
    <property type="evidence" value="ECO:0000270"/>
    <property type="project" value="RGD"/>
</dbReference>
<dbReference type="GO" id="GO:0002062">
    <property type="term" value="P:chondrocyte differentiation"/>
    <property type="evidence" value="ECO:0000250"/>
    <property type="project" value="UniProtKB"/>
</dbReference>
<dbReference type="GO" id="GO:0060976">
    <property type="term" value="P:coronary vasculature development"/>
    <property type="evidence" value="ECO:0000266"/>
    <property type="project" value="RGD"/>
</dbReference>
<dbReference type="GO" id="GO:0060363">
    <property type="term" value="P:cranial suture morphogenesis"/>
    <property type="evidence" value="ECO:0000266"/>
    <property type="project" value="RGD"/>
</dbReference>
<dbReference type="GO" id="GO:0035993">
    <property type="term" value="P:deltoid tuberosity development"/>
    <property type="evidence" value="ECO:0000250"/>
    <property type="project" value="UniProtKB"/>
</dbReference>
<dbReference type="GO" id="GO:0021904">
    <property type="term" value="P:dorsal/ventral neural tube patterning"/>
    <property type="evidence" value="ECO:0000266"/>
    <property type="project" value="RGD"/>
</dbReference>
<dbReference type="GO" id="GO:0048701">
    <property type="term" value="P:embryonic cranial skeleton morphogenesis"/>
    <property type="evidence" value="ECO:0000266"/>
    <property type="project" value="RGD"/>
</dbReference>
<dbReference type="GO" id="GO:0042733">
    <property type="term" value="P:embryonic digit morphogenesis"/>
    <property type="evidence" value="ECO:0000266"/>
    <property type="project" value="RGD"/>
</dbReference>
<dbReference type="GO" id="GO:0035116">
    <property type="term" value="P:embryonic hindlimb morphogenesis"/>
    <property type="evidence" value="ECO:0000266"/>
    <property type="project" value="RGD"/>
</dbReference>
<dbReference type="GO" id="GO:0030326">
    <property type="term" value="P:embryonic limb morphogenesis"/>
    <property type="evidence" value="ECO:0000266"/>
    <property type="project" value="RGD"/>
</dbReference>
<dbReference type="GO" id="GO:0048598">
    <property type="term" value="P:embryonic morphogenesis"/>
    <property type="evidence" value="ECO:0000266"/>
    <property type="project" value="RGD"/>
</dbReference>
<dbReference type="GO" id="GO:0060272">
    <property type="term" value="P:embryonic skeletal joint morphogenesis"/>
    <property type="evidence" value="ECO:0000266"/>
    <property type="project" value="RGD"/>
</dbReference>
<dbReference type="GO" id="GO:0048706">
    <property type="term" value="P:embryonic skeletal system development"/>
    <property type="evidence" value="ECO:0000266"/>
    <property type="project" value="RGD"/>
</dbReference>
<dbReference type="GO" id="GO:0048704">
    <property type="term" value="P:embryonic skeletal system morphogenesis"/>
    <property type="evidence" value="ECO:0000266"/>
    <property type="project" value="RGD"/>
</dbReference>
<dbReference type="GO" id="GO:0003197">
    <property type="term" value="P:endocardial cushion development"/>
    <property type="evidence" value="ECO:0000266"/>
    <property type="project" value="RGD"/>
</dbReference>
<dbReference type="GO" id="GO:0001958">
    <property type="term" value="P:endochondral ossification"/>
    <property type="evidence" value="ECO:0000250"/>
    <property type="project" value="UniProtKB"/>
</dbReference>
<dbReference type="GO" id="GO:0007492">
    <property type="term" value="P:endoderm development"/>
    <property type="evidence" value="ECO:0000266"/>
    <property type="project" value="RGD"/>
</dbReference>
<dbReference type="GO" id="GO:0050673">
    <property type="term" value="P:epithelial cell proliferation"/>
    <property type="evidence" value="ECO:0000266"/>
    <property type="project" value="RGD"/>
</dbReference>
<dbReference type="GO" id="GO:0060502">
    <property type="term" value="P:epithelial cell proliferation involved in lung morphogenesis"/>
    <property type="evidence" value="ECO:0000266"/>
    <property type="project" value="RGD"/>
</dbReference>
<dbReference type="GO" id="GO:0060441">
    <property type="term" value="P:epithelial tube branching involved in lung morphogenesis"/>
    <property type="evidence" value="ECO:0000270"/>
    <property type="project" value="RGD"/>
</dbReference>
<dbReference type="GO" id="GO:0060684">
    <property type="term" value="P:epithelial-mesenchymal cell signaling"/>
    <property type="evidence" value="ECO:0000266"/>
    <property type="project" value="RGD"/>
</dbReference>
<dbReference type="GO" id="GO:0060429">
    <property type="term" value="P:epithelium development"/>
    <property type="evidence" value="ECO:0000266"/>
    <property type="project" value="RGD"/>
</dbReference>
<dbReference type="GO" id="GO:0030218">
    <property type="term" value="P:erythrocyte differentiation"/>
    <property type="evidence" value="ECO:0000266"/>
    <property type="project" value="RGD"/>
</dbReference>
<dbReference type="GO" id="GO:0030900">
    <property type="term" value="P:forebrain development"/>
    <property type="evidence" value="ECO:0000266"/>
    <property type="project" value="RGD"/>
</dbReference>
<dbReference type="GO" id="GO:0010467">
    <property type="term" value="P:gene expression"/>
    <property type="evidence" value="ECO:0000266"/>
    <property type="project" value="RGD"/>
</dbReference>
<dbReference type="GO" id="GO:0007281">
    <property type="term" value="P:germ cell development"/>
    <property type="evidence" value="ECO:0000266"/>
    <property type="project" value="RGD"/>
</dbReference>
<dbReference type="GO" id="GO:0072104">
    <property type="term" value="P:glomerular capillary formation"/>
    <property type="evidence" value="ECO:0000250"/>
    <property type="project" value="UniProtKB"/>
</dbReference>
<dbReference type="GO" id="GO:0007507">
    <property type="term" value="P:heart development"/>
    <property type="evidence" value="ECO:0000266"/>
    <property type="project" value="RGD"/>
</dbReference>
<dbReference type="GO" id="GO:0003129">
    <property type="term" value="P:heart induction"/>
    <property type="evidence" value="ECO:0000250"/>
    <property type="project" value="UniProtKB"/>
</dbReference>
<dbReference type="GO" id="GO:0003007">
    <property type="term" value="P:heart morphogenesis"/>
    <property type="evidence" value="ECO:0000266"/>
    <property type="project" value="RGD"/>
</dbReference>
<dbReference type="GO" id="GO:0002244">
    <property type="term" value="P:hematopoietic progenitor cell differentiation"/>
    <property type="evidence" value="ECO:0000250"/>
    <property type="project" value="UniProtKB"/>
</dbReference>
<dbReference type="GO" id="GO:0042491">
    <property type="term" value="P:inner ear auditory receptor cell differentiation"/>
    <property type="evidence" value="ECO:0000266"/>
    <property type="project" value="RGD"/>
</dbReference>
<dbReference type="GO" id="GO:0048392">
    <property type="term" value="P:intermediate mesodermal cell differentiation"/>
    <property type="evidence" value="ECO:0000250"/>
    <property type="project" value="UniProtKB"/>
</dbReference>
<dbReference type="GO" id="GO:0001822">
    <property type="term" value="P:kidney development"/>
    <property type="evidence" value="ECO:0000250"/>
    <property type="project" value="UniProtKB"/>
</dbReference>
<dbReference type="GO" id="GO:0060235">
    <property type="term" value="P:lens induction in camera-type eye"/>
    <property type="evidence" value="ECO:0000266"/>
    <property type="project" value="RGD"/>
</dbReference>
<dbReference type="GO" id="GO:0048286">
    <property type="term" value="P:lung alveolus development"/>
    <property type="evidence" value="ECO:0000266"/>
    <property type="project" value="RGD"/>
</dbReference>
<dbReference type="GO" id="GO:0030324">
    <property type="term" value="P:lung development"/>
    <property type="evidence" value="ECO:0000266"/>
    <property type="project" value="RGD"/>
</dbReference>
<dbReference type="GO" id="GO:0060462">
    <property type="term" value="P:lung lobe development"/>
    <property type="evidence" value="ECO:0000270"/>
    <property type="project" value="RGD"/>
</dbReference>
<dbReference type="GO" id="GO:0060425">
    <property type="term" value="P:lung morphogenesis"/>
    <property type="evidence" value="ECO:0000266"/>
    <property type="project" value="RGD"/>
</dbReference>
<dbReference type="GO" id="GO:0060426">
    <property type="term" value="P:lung vasculature development"/>
    <property type="evidence" value="ECO:0000250"/>
    <property type="project" value="UniProtKB"/>
</dbReference>
<dbReference type="GO" id="GO:0002320">
    <property type="term" value="P:lymphoid progenitor cell differentiation"/>
    <property type="evidence" value="ECO:0000250"/>
    <property type="project" value="UniProtKB"/>
</dbReference>
<dbReference type="GO" id="GO:0030225">
    <property type="term" value="P:macrophage differentiation"/>
    <property type="evidence" value="ECO:0000266"/>
    <property type="project" value="RGD"/>
</dbReference>
<dbReference type="GO" id="GO:0060592">
    <property type="term" value="P:mammary gland formation"/>
    <property type="evidence" value="ECO:0000266"/>
    <property type="project" value="RGD"/>
</dbReference>
<dbReference type="GO" id="GO:0003149">
    <property type="term" value="P:membranous septum morphogenesis"/>
    <property type="evidence" value="ECO:0000266"/>
    <property type="project" value="RGD"/>
</dbReference>
<dbReference type="GO" id="GO:0007498">
    <property type="term" value="P:mesoderm development"/>
    <property type="evidence" value="ECO:0000303"/>
    <property type="project" value="RGD"/>
</dbReference>
<dbReference type="GO" id="GO:0001707">
    <property type="term" value="P:mesoderm formation"/>
    <property type="evidence" value="ECO:0000266"/>
    <property type="project" value="RGD"/>
</dbReference>
<dbReference type="GO" id="GO:0048333">
    <property type="term" value="P:mesodermal cell differentiation"/>
    <property type="evidence" value="ECO:0000266"/>
    <property type="project" value="RGD"/>
</dbReference>
<dbReference type="GO" id="GO:0007500">
    <property type="term" value="P:mesodermal cell fate determination"/>
    <property type="evidence" value="ECO:0000266"/>
    <property type="project" value="RGD"/>
</dbReference>
<dbReference type="GO" id="GO:0001823">
    <property type="term" value="P:mesonephros development"/>
    <property type="evidence" value="ECO:0000250"/>
    <property type="project" value="UniProtKB"/>
</dbReference>
<dbReference type="GO" id="GO:0001656">
    <property type="term" value="P:metanephros development"/>
    <property type="evidence" value="ECO:0000266"/>
    <property type="project" value="RGD"/>
</dbReference>
<dbReference type="GO" id="GO:0030224">
    <property type="term" value="P:monocyte differentiation"/>
    <property type="evidence" value="ECO:0000266"/>
    <property type="project" value="RGD"/>
</dbReference>
<dbReference type="GO" id="GO:0090191">
    <property type="term" value="P:negative regulation of branching involved in ureteric bud morphogenesis"/>
    <property type="evidence" value="ECO:0000250"/>
    <property type="project" value="UniProtKB"/>
</dbReference>
<dbReference type="GO" id="GO:0045786">
    <property type="term" value="P:negative regulation of cell cycle"/>
    <property type="evidence" value="ECO:0000250"/>
    <property type="project" value="UniProtKB"/>
</dbReference>
<dbReference type="GO" id="GO:0008285">
    <property type="term" value="P:negative regulation of cell population proliferation"/>
    <property type="evidence" value="ECO:0000250"/>
    <property type="project" value="UniProtKB"/>
</dbReference>
<dbReference type="GO" id="GO:0032331">
    <property type="term" value="P:negative regulation of chondrocyte differentiation"/>
    <property type="evidence" value="ECO:0000266"/>
    <property type="project" value="RGD"/>
</dbReference>
<dbReference type="GO" id="GO:0045892">
    <property type="term" value="P:negative regulation of DNA-templated transcription"/>
    <property type="evidence" value="ECO:0000266"/>
    <property type="project" value="RGD"/>
</dbReference>
<dbReference type="GO" id="GO:0050680">
    <property type="term" value="P:negative regulation of epithelial cell proliferation"/>
    <property type="evidence" value="ECO:0000266"/>
    <property type="project" value="RGD"/>
</dbReference>
<dbReference type="GO" id="GO:2001237">
    <property type="term" value="P:negative regulation of extrinsic apoptotic signaling pathway"/>
    <property type="evidence" value="ECO:0000266"/>
    <property type="project" value="RGD"/>
</dbReference>
<dbReference type="GO" id="GO:0010629">
    <property type="term" value="P:negative regulation of gene expression"/>
    <property type="evidence" value="ECO:0000266"/>
    <property type="project" value="RGD"/>
</dbReference>
<dbReference type="GO" id="GO:0072125">
    <property type="term" value="P:negative regulation of glomerular mesangial cell proliferation"/>
    <property type="evidence" value="ECO:0000250"/>
    <property type="project" value="UniProtKB"/>
</dbReference>
<dbReference type="GO" id="GO:0090194">
    <property type="term" value="P:negative regulation of glomerulus development"/>
    <property type="evidence" value="ECO:0000250"/>
    <property type="project" value="UniProtKB"/>
</dbReference>
<dbReference type="GO" id="GO:0033088">
    <property type="term" value="P:negative regulation of immature T cell proliferation in thymus"/>
    <property type="evidence" value="ECO:0000250"/>
    <property type="project" value="UniProtKB"/>
</dbReference>
<dbReference type="GO" id="GO:0072200">
    <property type="term" value="P:negative regulation of mesenchymal cell proliferation involved in ureter development"/>
    <property type="evidence" value="ECO:0000250"/>
    <property type="project" value="UniProtKB"/>
</dbReference>
<dbReference type="GO" id="GO:2000007">
    <property type="term" value="P:negative regulation of metanephric comma-shaped body morphogenesis"/>
    <property type="evidence" value="ECO:0000250"/>
    <property type="project" value="UniProtKB"/>
</dbReference>
<dbReference type="GO" id="GO:2000005">
    <property type="term" value="P:negative regulation of metanephric S-shaped body morphogenesis"/>
    <property type="evidence" value="ECO:0000250"/>
    <property type="project" value="UniProtKB"/>
</dbReference>
<dbReference type="GO" id="GO:1902894">
    <property type="term" value="P:negative regulation of miRNA transcription"/>
    <property type="evidence" value="ECO:0000266"/>
    <property type="project" value="RGD"/>
</dbReference>
<dbReference type="GO" id="GO:0045839">
    <property type="term" value="P:negative regulation of mitotic nuclear division"/>
    <property type="evidence" value="ECO:0000250"/>
    <property type="project" value="UniProtKB"/>
</dbReference>
<dbReference type="GO" id="GO:0045662">
    <property type="term" value="P:negative regulation of myoblast differentiation"/>
    <property type="evidence" value="ECO:0000266"/>
    <property type="project" value="RGD"/>
</dbReference>
<dbReference type="GO" id="GO:0048715">
    <property type="term" value="P:negative regulation of oligodendrocyte differentiation"/>
    <property type="evidence" value="ECO:0000315"/>
    <property type="project" value="RGD"/>
</dbReference>
<dbReference type="GO" id="GO:0060686">
    <property type="term" value="P:negative regulation of prostatic bud formation"/>
    <property type="evidence" value="ECO:0000266"/>
    <property type="project" value="RGD"/>
</dbReference>
<dbReference type="GO" id="GO:0045843">
    <property type="term" value="P:negative regulation of striated muscle tissue development"/>
    <property type="evidence" value="ECO:0000266"/>
    <property type="project" value="RGD"/>
</dbReference>
<dbReference type="GO" id="GO:0033085">
    <property type="term" value="P:negative regulation of T cell differentiation in thymus"/>
    <property type="evidence" value="ECO:0000266"/>
    <property type="project" value="RGD"/>
</dbReference>
<dbReference type="GO" id="GO:0070244">
    <property type="term" value="P:negative regulation of thymocyte apoptotic process"/>
    <property type="evidence" value="ECO:0000250"/>
    <property type="project" value="UniProtKB"/>
</dbReference>
<dbReference type="GO" id="GO:0000122">
    <property type="term" value="P:negative regulation of transcription by RNA polymerase II"/>
    <property type="evidence" value="ECO:0000266"/>
    <property type="project" value="RGD"/>
</dbReference>
<dbReference type="GO" id="GO:0072179">
    <property type="term" value="P:nephric duct formation"/>
    <property type="evidence" value="ECO:0000250"/>
    <property type="project" value="UniProtKB"/>
</dbReference>
<dbReference type="GO" id="GO:0001843">
    <property type="term" value="P:neural tube closure"/>
    <property type="evidence" value="ECO:0000266"/>
    <property type="project" value="RGD"/>
</dbReference>
<dbReference type="GO" id="GO:0048663">
    <property type="term" value="P:neuron fate commitment"/>
    <property type="evidence" value="ECO:0000266"/>
    <property type="project" value="RGD"/>
</dbReference>
<dbReference type="GO" id="GO:0042476">
    <property type="term" value="P:odontogenesis"/>
    <property type="evidence" value="ECO:0000250"/>
    <property type="project" value="UniProtKB"/>
</dbReference>
<dbReference type="GO" id="GO:0042475">
    <property type="term" value="P:odontogenesis of dentin-containing tooth"/>
    <property type="evidence" value="ECO:0000266"/>
    <property type="project" value="RGD"/>
</dbReference>
<dbReference type="GO" id="GO:0001759">
    <property type="term" value="P:organ induction"/>
    <property type="evidence" value="ECO:0000266"/>
    <property type="project" value="RGD"/>
</dbReference>
<dbReference type="GO" id="GO:0001649">
    <property type="term" value="P:osteoblast differentiation"/>
    <property type="evidence" value="ECO:0000250"/>
    <property type="project" value="UniProtKB"/>
</dbReference>
<dbReference type="GO" id="GO:0003151">
    <property type="term" value="P:outflow tract morphogenesis"/>
    <property type="evidence" value="ECO:0000266"/>
    <property type="project" value="RGD"/>
</dbReference>
<dbReference type="GO" id="GO:0003148">
    <property type="term" value="P:outflow tract septum morphogenesis"/>
    <property type="evidence" value="ECO:0000266"/>
    <property type="project" value="RGD"/>
</dbReference>
<dbReference type="GO" id="GO:0001541">
    <property type="term" value="P:ovarian follicle development"/>
    <property type="evidence" value="ECO:0000315"/>
    <property type="project" value="RGD"/>
</dbReference>
<dbReference type="GO" id="GO:1904238">
    <property type="term" value="P:pericyte cell differentiation"/>
    <property type="evidence" value="ECO:0000266"/>
    <property type="project" value="RGD"/>
</dbReference>
<dbReference type="GO" id="GO:0061626">
    <property type="term" value="P:pharyngeal arch artery morphogenesis"/>
    <property type="evidence" value="ECO:0000266"/>
    <property type="project" value="RGD"/>
</dbReference>
<dbReference type="GO" id="GO:0021983">
    <property type="term" value="P:pituitary gland development"/>
    <property type="evidence" value="ECO:0000266"/>
    <property type="project" value="RGD"/>
</dbReference>
<dbReference type="GO" id="GO:0043065">
    <property type="term" value="P:positive regulation of apoptotic process"/>
    <property type="evidence" value="ECO:0000266"/>
    <property type="project" value="RGD"/>
</dbReference>
<dbReference type="GO" id="GO:0030513">
    <property type="term" value="P:positive regulation of BMP signaling pathway"/>
    <property type="evidence" value="ECO:0000250"/>
    <property type="project" value="UniProtKB"/>
</dbReference>
<dbReference type="GO" id="GO:0030501">
    <property type="term" value="P:positive regulation of bone mineralization"/>
    <property type="evidence" value="ECO:0000314"/>
    <property type="project" value="RGD"/>
</dbReference>
<dbReference type="GO" id="GO:0061047">
    <property type="term" value="P:positive regulation of branching involved in lung morphogenesis"/>
    <property type="evidence" value="ECO:0000250"/>
    <property type="project" value="UniProtKB"/>
</dbReference>
<dbReference type="GO" id="GO:0090190">
    <property type="term" value="P:positive regulation of branching involved in ureteric bud morphogenesis"/>
    <property type="evidence" value="ECO:0000315"/>
    <property type="project" value="UniProtKB"/>
</dbReference>
<dbReference type="GO" id="GO:0010524">
    <property type="term" value="P:positive regulation of calcium ion transport into cytosol"/>
    <property type="evidence" value="ECO:0000315"/>
    <property type="project" value="RGD"/>
</dbReference>
<dbReference type="GO" id="GO:0055020">
    <property type="term" value="P:positive regulation of cardiac muscle fiber development"/>
    <property type="evidence" value="ECO:0000250"/>
    <property type="project" value="UniProtKB"/>
</dbReference>
<dbReference type="GO" id="GO:1905312">
    <property type="term" value="P:positive regulation of cardiac neural crest cell migration involved in outflow tract morphogenesis"/>
    <property type="evidence" value="ECO:0000266"/>
    <property type="project" value="RGD"/>
</dbReference>
<dbReference type="GO" id="GO:0061036">
    <property type="term" value="P:positive regulation of cartilage development"/>
    <property type="evidence" value="ECO:0000266"/>
    <property type="project" value="RGD"/>
</dbReference>
<dbReference type="GO" id="GO:0030335">
    <property type="term" value="P:positive regulation of cell migration"/>
    <property type="evidence" value="ECO:0000266"/>
    <property type="project" value="RGD"/>
</dbReference>
<dbReference type="GO" id="GO:0008284">
    <property type="term" value="P:positive regulation of cell population proliferation"/>
    <property type="evidence" value="ECO:0000315"/>
    <property type="project" value="RGD"/>
</dbReference>
<dbReference type="GO" id="GO:0032967">
    <property type="term" value="P:positive regulation of collagen biosynthetic process"/>
    <property type="evidence" value="ECO:0000250"/>
    <property type="project" value="UniProtKB"/>
</dbReference>
<dbReference type="GO" id="GO:0045893">
    <property type="term" value="P:positive regulation of DNA-templated transcription"/>
    <property type="evidence" value="ECO:0000250"/>
    <property type="project" value="UniProtKB"/>
</dbReference>
<dbReference type="GO" id="GO:2000353">
    <property type="term" value="P:positive regulation of endothelial cell apoptotic process"/>
    <property type="evidence" value="ECO:0000315"/>
    <property type="project" value="RGD"/>
</dbReference>
<dbReference type="GO" id="GO:0045603">
    <property type="term" value="P:positive regulation of endothelial cell differentiation"/>
    <property type="evidence" value="ECO:0000266"/>
    <property type="project" value="RGD"/>
</dbReference>
<dbReference type="GO" id="GO:0001938">
    <property type="term" value="P:positive regulation of endothelial cell proliferation"/>
    <property type="evidence" value="ECO:0000266"/>
    <property type="project" value="RGD"/>
</dbReference>
<dbReference type="GO" id="GO:0045606">
    <property type="term" value="P:positive regulation of epidermal cell differentiation"/>
    <property type="evidence" value="ECO:0000250"/>
    <property type="project" value="CAFA"/>
</dbReference>
<dbReference type="GO" id="GO:0030858">
    <property type="term" value="P:positive regulation of epithelial cell differentiation"/>
    <property type="evidence" value="ECO:0000266"/>
    <property type="project" value="RGD"/>
</dbReference>
<dbReference type="GO" id="GO:0050679">
    <property type="term" value="P:positive regulation of epithelial cell proliferation"/>
    <property type="evidence" value="ECO:0000250"/>
    <property type="project" value="UniProtKB"/>
</dbReference>
<dbReference type="GO" id="GO:0010718">
    <property type="term" value="P:positive regulation of epithelial to mesenchymal transition"/>
    <property type="evidence" value="ECO:0000266"/>
    <property type="project" value="RGD"/>
</dbReference>
<dbReference type="GO" id="GO:0070374">
    <property type="term" value="P:positive regulation of ERK1 and ERK2 cascade"/>
    <property type="evidence" value="ECO:0000266"/>
    <property type="project" value="RGD"/>
</dbReference>
<dbReference type="GO" id="GO:0010628">
    <property type="term" value="P:positive regulation of gene expression"/>
    <property type="evidence" value="ECO:0000266"/>
    <property type="project" value="RGD"/>
</dbReference>
<dbReference type="GO" id="GO:0070368">
    <property type="term" value="P:positive regulation of hepatocyte differentiation"/>
    <property type="evidence" value="ECO:0000315"/>
    <property type="project" value="RGD"/>
</dbReference>
<dbReference type="GO" id="GO:1902462">
    <property type="term" value="P:positive regulation of mesenchymal stem cell proliferation"/>
    <property type="evidence" value="ECO:0000315"/>
    <property type="project" value="RGD"/>
</dbReference>
<dbReference type="GO" id="GO:1902895">
    <property type="term" value="P:positive regulation of miRNA transcription"/>
    <property type="evidence" value="ECO:0000266"/>
    <property type="project" value="RGD"/>
</dbReference>
<dbReference type="GO" id="GO:0045666">
    <property type="term" value="P:positive regulation of neuron differentiation"/>
    <property type="evidence" value="ECO:0000315"/>
    <property type="project" value="RGD"/>
</dbReference>
<dbReference type="GO" id="GO:0010976">
    <property type="term" value="P:positive regulation of neuron projection development"/>
    <property type="evidence" value="ECO:0000314"/>
    <property type="project" value="RGD"/>
</dbReference>
<dbReference type="GO" id="GO:1901331">
    <property type="term" value="P:positive regulation of odontoblast differentiation"/>
    <property type="evidence" value="ECO:0000250"/>
    <property type="project" value="UniProtKB"/>
</dbReference>
<dbReference type="GO" id="GO:0045778">
    <property type="term" value="P:positive regulation of ossification"/>
    <property type="evidence" value="ECO:0000314"/>
    <property type="project" value="MGI"/>
</dbReference>
<dbReference type="GO" id="GO:0045669">
    <property type="term" value="P:positive regulation of osteoblast differentiation"/>
    <property type="evidence" value="ECO:0000314"/>
    <property type="project" value="RGD"/>
</dbReference>
<dbReference type="GO" id="GO:1900745">
    <property type="term" value="P:positive regulation of p38MAPK cascade"/>
    <property type="evidence" value="ECO:0000266"/>
    <property type="project" value="RGD"/>
</dbReference>
<dbReference type="GO" id="GO:2000636">
    <property type="term" value="P:positive regulation of primary miRNA processing"/>
    <property type="evidence" value="ECO:0000266"/>
    <property type="project" value="RGD"/>
</dbReference>
<dbReference type="GO" id="GO:0043068">
    <property type="term" value="P:positive regulation of programmed cell death"/>
    <property type="evidence" value="ECO:0000266"/>
    <property type="project" value="RGD"/>
</dbReference>
<dbReference type="GO" id="GO:1900182">
    <property type="term" value="P:positive regulation of protein localization to nucleus"/>
    <property type="evidence" value="ECO:0000250"/>
    <property type="project" value="UniProtKB"/>
</dbReference>
<dbReference type="GO" id="GO:0060391">
    <property type="term" value="P:positive regulation of SMAD protein signal transduction"/>
    <property type="evidence" value="ECO:0000250"/>
    <property type="project" value="UniProtKB"/>
</dbReference>
<dbReference type="GO" id="GO:0048661">
    <property type="term" value="P:positive regulation of smooth muscle cell proliferation"/>
    <property type="evidence" value="ECO:0000266"/>
    <property type="project" value="RGD"/>
</dbReference>
<dbReference type="GO" id="GO:0045944">
    <property type="term" value="P:positive regulation of transcription by RNA polymerase II"/>
    <property type="evidence" value="ECO:0000314"/>
    <property type="project" value="MGI"/>
</dbReference>
<dbReference type="GO" id="GO:0009791">
    <property type="term" value="P:post-embryonic development"/>
    <property type="evidence" value="ECO:0000266"/>
    <property type="project" value="RGD"/>
</dbReference>
<dbReference type="GO" id="GO:0060512">
    <property type="term" value="P:prostate gland morphogenesis"/>
    <property type="evidence" value="ECO:0000266"/>
    <property type="project" value="RGD"/>
</dbReference>
<dbReference type="GO" id="GO:0060513">
    <property type="term" value="P:prostatic bud formation"/>
    <property type="evidence" value="ECO:0000266"/>
    <property type="project" value="RGD"/>
</dbReference>
<dbReference type="GO" id="GO:0003184">
    <property type="term" value="P:pulmonary valve morphogenesis"/>
    <property type="evidence" value="ECO:0000266"/>
    <property type="project" value="RGD"/>
</dbReference>
<dbReference type="GO" id="GO:0060687">
    <property type="term" value="P:regulation of branching involved in prostate gland morphogenesis"/>
    <property type="evidence" value="ECO:0000266"/>
    <property type="project" value="RGD"/>
</dbReference>
<dbReference type="GO" id="GO:0061035">
    <property type="term" value="P:regulation of cartilage development"/>
    <property type="evidence" value="ECO:0000266"/>
    <property type="project" value="RGD"/>
</dbReference>
<dbReference type="GO" id="GO:0045595">
    <property type="term" value="P:regulation of cell differentiation"/>
    <property type="evidence" value="ECO:0000314"/>
    <property type="project" value="RGD"/>
</dbReference>
<dbReference type="GO" id="GO:0010453">
    <property type="term" value="P:regulation of cell fate commitment"/>
    <property type="evidence" value="ECO:0000250"/>
    <property type="project" value="CAFA"/>
</dbReference>
<dbReference type="GO" id="GO:0070372">
    <property type="term" value="P:regulation of ERK1 and ERK2 cascade"/>
    <property type="evidence" value="ECO:0000314"/>
    <property type="project" value="RGD"/>
</dbReference>
<dbReference type="GO" id="GO:0010468">
    <property type="term" value="P:regulation of gene expression"/>
    <property type="evidence" value="ECO:0000266"/>
    <property type="project" value="RGD"/>
</dbReference>
<dbReference type="GO" id="GO:1905770">
    <property type="term" value="P:regulation of mesodermal cell differentiation"/>
    <property type="evidence" value="ECO:0000266"/>
    <property type="project" value="RGD"/>
</dbReference>
<dbReference type="GO" id="GO:0060688">
    <property type="term" value="P:regulation of morphogenesis of a branching structure"/>
    <property type="evidence" value="ECO:0000266"/>
    <property type="project" value="RGD"/>
</dbReference>
<dbReference type="GO" id="GO:0042487">
    <property type="term" value="P:regulation of odontogenesis of dentin-containing tooth"/>
    <property type="evidence" value="ECO:0000266"/>
    <property type="project" value="RGD"/>
</dbReference>
<dbReference type="GO" id="GO:0042306">
    <property type="term" value="P:regulation of protein import into nucleus"/>
    <property type="evidence" value="ECO:0000266"/>
    <property type="project" value="RGD"/>
</dbReference>
<dbReference type="GO" id="GO:0051150">
    <property type="term" value="P:regulation of smooth muscle cell differentiation"/>
    <property type="evidence" value="ECO:0000266"/>
    <property type="project" value="RGD"/>
</dbReference>
<dbReference type="GO" id="GO:0048660">
    <property type="term" value="P:regulation of smooth muscle cell proliferation"/>
    <property type="evidence" value="ECO:0000266"/>
    <property type="project" value="RGD"/>
</dbReference>
<dbReference type="GO" id="GO:0003014">
    <property type="term" value="P:renal system process"/>
    <property type="evidence" value="ECO:0000266"/>
    <property type="project" value="RGD"/>
</dbReference>
<dbReference type="GO" id="GO:0032355">
    <property type="term" value="P:response to estradiol"/>
    <property type="evidence" value="ECO:0000270"/>
    <property type="project" value="RGD"/>
</dbReference>
<dbReference type="GO" id="GO:0051384">
    <property type="term" value="P:response to glucocorticoid"/>
    <property type="evidence" value="ECO:0000270"/>
    <property type="project" value="RGD"/>
</dbReference>
<dbReference type="GO" id="GO:0009612">
    <property type="term" value="P:response to mechanical stimulus"/>
    <property type="evidence" value="ECO:0000270"/>
    <property type="project" value="RGD"/>
</dbReference>
<dbReference type="GO" id="GO:0071731">
    <property type="term" value="P:response to nitric oxide"/>
    <property type="evidence" value="ECO:0000270"/>
    <property type="project" value="RGD"/>
</dbReference>
<dbReference type="GO" id="GO:0032526">
    <property type="term" value="P:response to retinoic acid"/>
    <property type="evidence" value="ECO:0000270"/>
    <property type="project" value="RGD"/>
</dbReference>
<dbReference type="GO" id="GO:0033574">
    <property type="term" value="P:response to testosterone"/>
    <property type="evidence" value="ECO:0000270"/>
    <property type="project" value="RGD"/>
</dbReference>
<dbReference type="GO" id="GO:0060041">
    <property type="term" value="P:retina development in camera-type eye"/>
    <property type="evidence" value="ECO:0000270"/>
    <property type="project" value="RGD"/>
</dbReference>
<dbReference type="GO" id="GO:0003139">
    <property type="term" value="P:secondary heart field specification"/>
    <property type="evidence" value="ECO:0000250"/>
    <property type="project" value="UniProtKB"/>
</dbReference>
<dbReference type="GO" id="GO:0001501">
    <property type="term" value="P:skeletal system development"/>
    <property type="evidence" value="ECO:0000266"/>
    <property type="project" value="RGD"/>
</dbReference>
<dbReference type="GO" id="GO:0051145">
    <property type="term" value="P:smooth muscle cell differentiation"/>
    <property type="evidence" value="ECO:0000266"/>
    <property type="project" value="RGD"/>
</dbReference>
<dbReference type="GO" id="GO:0048745">
    <property type="term" value="P:smooth muscle tissue development"/>
    <property type="evidence" value="ECO:0000250"/>
    <property type="project" value="UniProtKB"/>
</dbReference>
<dbReference type="GO" id="GO:0010159">
    <property type="term" value="P:specification of animal organ position"/>
    <property type="evidence" value="ECO:0000266"/>
    <property type="project" value="RGD"/>
</dbReference>
<dbReference type="GO" id="GO:0048863">
    <property type="term" value="P:stem cell differentiation"/>
    <property type="evidence" value="ECO:0000266"/>
    <property type="project" value="RGD"/>
</dbReference>
<dbReference type="GO" id="GO:0021537">
    <property type="term" value="P:telencephalon development"/>
    <property type="evidence" value="ECO:0000266"/>
    <property type="project" value="RGD"/>
</dbReference>
<dbReference type="GO" id="GO:0021978">
    <property type="term" value="P:telencephalon regionalization"/>
    <property type="evidence" value="ECO:0000266"/>
    <property type="project" value="RGD"/>
</dbReference>
<dbReference type="GO" id="GO:0035990">
    <property type="term" value="P:tendon cell differentiation"/>
    <property type="evidence" value="ECO:0000250"/>
    <property type="project" value="UniProtKB"/>
</dbReference>
<dbReference type="GO" id="GO:0043587">
    <property type="term" value="P:tongue morphogenesis"/>
    <property type="evidence" value="ECO:0000270"/>
    <property type="project" value="RGD"/>
</dbReference>
<dbReference type="GO" id="GO:0060438">
    <property type="term" value="P:trachea development"/>
    <property type="evidence" value="ECO:0000266"/>
    <property type="project" value="RGD"/>
</dbReference>
<dbReference type="GO" id="GO:0060440">
    <property type="term" value="P:trachea formation"/>
    <property type="evidence" value="ECO:0000266"/>
    <property type="project" value="RGD"/>
</dbReference>
<dbReference type="GO" id="GO:0006366">
    <property type="term" value="P:transcription by RNA polymerase II"/>
    <property type="evidence" value="ECO:0000266"/>
    <property type="project" value="RGD"/>
</dbReference>
<dbReference type="GO" id="GO:0003323">
    <property type="term" value="P:type B pancreatic cell development"/>
    <property type="evidence" value="ECO:0000250"/>
    <property type="project" value="UniProtKB"/>
</dbReference>
<dbReference type="GO" id="GO:0072197">
    <property type="term" value="P:ureter morphogenesis"/>
    <property type="evidence" value="ECO:0000266"/>
    <property type="project" value="RGD"/>
</dbReference>
<dbReference type="GO" id="GO:0001657">
    <property type="term" value="P:ureteric bud development"/>
    <property type="evidence" value="ECO:0000266"/>
    <property type="project" value="RGD"/>
</dbReference>
<dbReference type="GO" id="GO:0001944">
    <property type="term" value="P:vasculature development"/>
    <property type="evidence" value="ECO:0000266"/>
    <property type="project" value="RGD"/>
</dbReference>
<dbReference type="CDD" id="cd19391">
    <property type="entry name" value="TGF_beta_BMP4_BMP2B"/>
    <property type="match status" value="1"/>
</dbReference>
<dbReference type="FunFam" id="2.10.90.10:FF:000103">
    <property type="entry name" value="Bone morphogenetic protein 16"/>
    <property type="match status" value="1"/>
</dbReference>
<dbReference type="FunFam" id="2.60.120.970:FF:000005">
    <property type="entry name" value="Bone morphogenetic protein 4"/>
    <property type="match status" value="1"/>
</dbReference>
<dbReference type="Gene3D" id="2.60.120.970">
    <property type="match status" value="1"/>
</dbReference>
<dbReference type="Gene3D" id="2.10.90.10">
    <property type="entry name" value="Cystine-knot cytokines"/>
    <property type="match status" value="1"/>
</dbReference>
<dbReference type="InterPro" id="IPR047833">
    <property type="entry name" value="BMP4_TGF_beta-like"/>
</dbReference>
<dbReference type="InterPro" id="IPR029034">
    <property type="entry name" value="Cystine-knot_cytokine"/>
</dbReference>
<dbReference type="InterPro" id="IPR001839">
    <property type="entry name" value="TGF-b_C"/>
</dbReference>
<dbReference type="InterPro" id="IPR001111">
    <property type="entry name" value="TGF-b_propeptide"/>
</dbReference>
<dbReference type="InterPro" id="IPR015615">
    <property type="entry name" value="TGF-beta-rel"/>
</dbReference>
<dbReference type="InterPro" id="IPR017948">
    <property type="entry name" value="TGFb_CS"/>
</dbReference>
<dbReference type="PANTHER" id="PTHR11848:SF165">
    <property type="entry name" value="BONE MORPHOGENETIC PROTEIN 4"/>
    <property type="match status" value="1"/>
</dbReference>
<dbReference type="PANTHER" id="PTHR11848">
    <property type="entry name" value="TGF-BETA FAMILY"/>
    <property type="match status" value="1"/>
</dbReference>
<dbReference type="Pfam" id="PF00019">
    <property type="entry name" value="TGF_beta"/>
    <property type="match status" value="1"/>
</dbReference>
<dbReference type="Pfam" id="PF00688">
    <property type="entry name" value="TGFb_propeptide"/>
    <property type="match status" value="1"/>
</dbReference>
<dbReference type="SMART" id="SM00204">
    <property type="entry name" value="TGFB"/>
    <property type="match status" value="1"/>
</dbReference>
<dbReference type="SUPFAM" id="SSF57501">
    <property type="entry name" value="Cystine-knot cytokines"/>
    <property type="match status" value="1"/>
</dbReference>
<dbReference type="PROSITE" id="PS00250">
    <property type="entry name" value="TGF_BETA_1"/>
    <property type="match status" value="1"/>
</dbReference>
<dbReference type="PROSITE" id="PS51362">
    <property type="entry name" value="TGF_BETA_2"/>
    <property type="match status" value="1"/>
</dbReference>